<name>Y803_STAAR</name>
<proteinExistence type="inferred from homology"/>
<sequence length="288" mass="32069">MKIAVMTDSTSYLSQDLIDKYNIQIAPLSVTFDDGKNFTESNEIAIEEFYNKMASSQTIPTTSQPAIGEWITKYEMLRDQGYTDIIVICLSSGISGSYQSSYQAGEMVEGVNVHAFDSKLAAMIEGCYVLRAIEMVEEGYEPQQIIDDLTNMREHTGAYLIVDDLKNLQKSGRITGAQAWVGTLLKMKPVLKFEDGKIIPEEKVRTKKRAIQTLEKKVLDIVKDFEEVTLFVINGDHFEDGQALYKKLQDDCPSAYQVAYSEFGPVVAAHLGSGGLGLGYVGRKIRLT</sequence>
<comment type="function">
    <text evidence="1">May bind long-chain fatty acids, such as palmitate, and may play a role in lipid transport or fatty acid metabolism.</text>
</comment>
<accession>Q6GIP2</accession>
<evidence type="ECO:0000250" key="1"/>
<evidence type="ECO:0000250" key="2">
    <source>
        <dbReference type="UniProtKB" id="Q9X1H9"/>
    </source>
</evidence>
<evidence type="ECO:0000255" key="3">
    <source>
        <dbReference type="PROSITE-ProRule" id="PRU00815"/>
    </source>
</evidence>
<gene>
    <name type="ordered locus">SAR0803</name>
</gene>
<keyword id="KW-0446">Lipid-binding</keyword>
<reference key="1">
    <citation type="journal article" date="2004" name="Proc. Natl. Acad. Sci. U.S.A.">
        <title>Complete genomes of two clinical Staphylococcus aureus strains: evidence for the rapid evolution of virulence and drug resistance.</title>
        <authorList>
            <person name="Holden M.T.G."/>
            <person name="Feil E.J."/>
            <person name="Lindsay J.A."/>
            <person name="Peacock S.J."/>
            <person name="Day N.P.J."/>
            <person name="Enright M.C."/>
            <person name="Foster T.J."/>
            <person name="Moore C.E."/>
            <person name="Hurst L."/>
            <person name="Atkin R."/>
            <person name="Barron A."/>
            <person name="Bason N."/>
            <person name="Bentley S.D."/>
            <person name="Chillingworth C."/>
            <person name="Chillingworth T."/>
            <person name="Churcher C."/>
            <person name="Clark L."/>
            <person name="Corton C."/>
            <person name="Cronin A."/>
            <person name="Doggett J."/>
            <person name="Dowd L."/>
            <person name="Feltwell T."/>
            <person name="Hance Z."/>
            <person name="Harris B."/>
            <person name="Hauser H."/>
            <person name="Holroyd S."/>
            <person name="Jagels K."/>
            <person name="James K.D."/>
            <person name="Lennard N."/>
            <person name="Line A."/>
            <person name="Mayes R."/>
            <person name="Moule S."/>
            <person name="Mungall K."/>
            <person name="Ormond D."/>
            <person name="Quail M.A."/>
            <person name="Rabbinowitsch E."/>
            <person name="Rutherford K.M."/>
            <person name="Sanders M."/>
            <person name="Sharp S."/>
            <person name="Simmonds M."/>
            <person name="Stevens K."/>
            <person name="Whitehead S."/>
            <person name="Barrell B.G."/>
            <person name="Spratt B.G."/>
            <person name="Parkhill J."/>
        </authorList>
    </citation>
    <scope>NUCLEOTIDE SEQUENCE [LARGE SCALE GENOMIC DNA]</scope>
    <source>
        <strain>MRSA252</strain>
    </source>
</reference>
<protein>
    <recommendedName>
        <fullName>DegV domain-containing protein SAR0803</fullName>
    </recommendedName>
</protein>
<dbReference type="EMBL" id="BX571856">
    <property type="protein sequence ID" value="CAG39813.1"/>
    <property type="molecule type" value="Genomic_DNA"/>
</dbReference>
<dbReference type="SMR" id="Q6GIP2"/>
<dbReference type="KEGG" id="sar:SAR0803"/>
<dbReference type="HOGENOM" id="CLU_048251_3_1_9"/>
<dbReference type="Proteomes" id="UP000000596">
    <property type="component" value="Chromosome"/>
</dbReference>
<dbReference type="GO" id="GO:0008289">
    <property type="term" value="F:lipid binding"/>
    <property type="evidence" value="ECO:0007669"/>
    <property type="project" value="UniProtKB-KW"/>
</dbReference>
<dbReference type="Gene3D" id="3.30.1180.10">
    <property type="match status" value="1"/>
</dbReference>
<dbReference type="Gene3D" id="3.40.50.10170">
    <property type="match status" value="1"/>
</dbReference>
<dbReference type="InterPro" id="IPR003797">
    <property type="entry name" value="DegV"/>
</dbReference>
<dbReference type="InterPro" id="IPR043168">
    <property type="entry name" value="DegV_C"/>
</dbReference>
<dbReference type="InterPro" id="IPR050270">
    <property type="entry name" value="DegV_domain_contain"/>
</dbReference>
<dbReference type="NCBIfam" id="TIGR00762">
    <property type="entry name" value="DegV"/>
    <property type="match status" value="1"/>
</dbReference>
<dbReference type="NCBIfam" id="NF038249">
    <property type="entry name" value="fatty_FakB1"/>
    <property type="match status" value="1"/>
</dbReference>
<dbReference type="PANTHER" id="PTHR33434">
    <property type="entry name" value="DEGV DOMAIN-CONTAINING PROTEIN DR_1986-RELATED"/>
    <property type="match status" value="1"/>
</dbReference>
<dbReference type="PANTHER" id="PTHR33434:SF2">
    <property type="entry name" value="FATTY ACID-BINDING PROTEIN TM_1468"/>
    <property type="match status" value="1"/>
</dbReference>
<dbReference type="Pfam" id="PF02645">
    <property type="entry name" value="DegV"/>
    <property type="match status" value="1"/>
</dbReference>
<dbReference type="SUPFAM" id="SSF82549">
    <property type="entry name" value="DAK1/DegV-like"/>
    <property type="match status" value="1"/>
</dbReference>
<dbReference type="PROSITE" id="PS51482">
    <property type="entry name" value="DEGV"/>
    <property type="match status" value="1"/>
</dbReference>
<organism>
    <name type="scientific">Staphylococcus aureus (strain MRSA252)</name>
    <dbReference type="NCBI Taxonomy" id="282458"/>
    <lineage>
        <taxon>Bacteria</taxon>
        <taxon>Bacillati</taxon>
        <taxon>Bacillota</taxon>
        <taxon>Bacilli</taxon>
        <taxon>Bacillales</taxon>
        <taxon>Staphylococcaceae</taxon>
        <taxon>Staphylococcus</taxon>
    </lineage>
</organism>
<feature type="chain" id="PRO_0000209783" description="DegV domain-containing protein SAR0803">
    <location>
        <begin position="1"/>
        <end position="288"/>
    </location>
</feature>
<feature type="domain" description="DegV" evidence="3">
    <location>
        <begin position="3"/>
        <end position="282"/>
    </location>
</feature>
<feature type="binding site" evidence="2">
    <location>
        <position position="62"/>
    </location>
    <ligand>
        <name>hexadecanoate</name>
        <dbReference type="ChEBI" id="CHEBI:7896"/>
    </ligand>
</feature>
<feature type="binding site" evidence="2">
    <location>
        <position position="95"/>
    </location>
    <ligand>
        <name>hexadecanoate</name>
        <dbReference type="ChEBI" id="CHEBI:7896"/>
    </ligand>
</feature>